<sequence length="139" mass="15283">MKKGTVLNSDISSVISRLGHTDTLVVCDAGLPIPKSTTRIDMALTQGVPSFMQVLGVVTNEMQVEAAIIAEEIKQHNPQLHETLLTHLEQLQKHQGNTIEIRYTTHEQFKQQTAESQAVIRSGECSPYANIILCAGVTF</sequence>
<reference key="1">
    <citation type="journal article" date="2009" name="PLoS Genet.">
        <title>Organised genome dynamics in the Escherichia coli species results in highly diverse adaptive paths.</title>
        <authorList>
            <person name="Touchon M."/>
            <person name="Hoede C."/>
            <person name="Tenaillon O."/>
            <person name="Barbe V."/>
            <person name="Baeriswyl S."/>
            <person name="Bidet P."/>
            <person name="Bingen E."/>
            <person name="Bonacorsi S."/>
            <person name="Bouchier C."/>
            <person name="Bouvet O."/>
            <person name="Calteau A."/>
            <person name="Chiapello H."/>
            <person name="Clermont O."/>
            <person name="Cruveiller S."/>
            <person name="Danchin A."/>
            <person name="Diard M."/>
            <person name="Dossat C."/>
            <person name="Karoui M.E."/>
            <person name="Frapy E."/>
            <person name="Garry L."/>
            <person name="Ghigo J.M."/>
            <person name="Gilles A.M."/>
            <person name="Johnson J."/>
            <person name="Le Bouguenec C."/>
            <person name="Lescat M."/>
            <person name="Mangenot S."/>
            <person name="Martinez-Jehanne V."/>
            <person name="Matic I."/>
            <person name="Nassif X."/>
            <person name="Oztas S."/>
            <person name="Petit M.A."/>
            <person name="Pichon C."/>
            <person name="Rouy Z."/>
            <person name="Ruf C.S."/>
            <person name="Schneider D."/>
            <person name="Tourret J."/>
            <person name="Vacherie B."/>
            <person name="Vallenet D."/>
            <person name="Medigue C."/>
            <person name="Rocha E.P.C."/>
            <person name="Denamur E."/>
        </authorList>
    </citation>
    <scope>NUCLEOTIDE SEQUENCE [LARGE SCALE GENOMIC DNA]</scope>
    <source>
        <strain>ATCC 35469 / DSM 13698 / BCRC 15582 / CCUG 18766 / IAM 14443 / JCM 21226 / LMG 7866 / NBRC 102419 / NCTC 12128 / CDC 0568-73</strain>
    </source>
</reference>
<dbReference type="EC" id="5.4.99.62" evidence="1"/>
<dbReference type="EMBL" id="CU928158">
    <property type="protein sequence ID" value="CAQ91481.1"/>
    <property type="molecule type" value="Genomic_DNA"/>
</dbReference>
<dbReference type="RefSeq" id="WP_000715936.1">
    <property type="nucleotide sequence ID" value="NC_011740.1"/>
</dbReference>
<dbReference type="SMR" id="B7LK93"/>
<dbReference type="GeneID" id="93778201"/>
<dbReference type="KEGG" id="efe:EFER_4047"/>
<dbReference type="HOGENOM" id="CLU_135498_0_0_6"/>
<dbReference type="OrthoDB" id="9805009at2"/>
<dbReference type="UniPathway" id="UPA00916">
    <property type="reaction ID" value="UER00888"/>
</dbReference>
<dbReference type="Proteomes" id="UP000000745">
    <property type="component" value="Chromosome"/>
</dbReference>
<dbReference type="GO" id="GO:0005829">
    <property type="term" value="C:cytosol"/>
    <property type="evidence" value="ECO:0007669"/>
    <property type="project" value="TreeGrafter"/>
</dbReference>
<dbReference type="GO" id="GO:0062193">
    <property type="term" value="F:D-ribose pyranase activity"/>
    <property type="evidence" value="ECO:0007669"/>
    <property type="project" value="UniProtKB-EC"/>
</dbReference>
<dbReference type="GO" id="GO:0016872">
    <property type="term" value="F:intramolecular lyase activity"/>
    <property type="evidence" value="ECO:0007669"/>
    <property type="project" value="UniProtKB-UniRule"/>
</dbReference>
<dbReference type="GO" id="GO:0048029">
    <property type="term" value="F:monosaccharide binding"/>
    <property type="evidence" value="ECO:0007669"/>
    <property type="project" value="InterPro"/>
</dbReference>
<dbReference type="GO" id="GO:0019303">
    <property type="term" value="P:D-ribose catabolic process"/>
    <property type="evidence" value="ECO:0007669"/>
    <property type="project" value="UniProtKB-UniRule"/>
</dbReference>
<dbReference type="FunFam" id="3.40.1650.10:FF:000002">
    <property type="entry name" value="D-ribose pyranase"/>
    <property type="match status" value="1"/>
</dbReference>
<dbReference type="Gene3D" id="3.40.1650.10">
    <property type="entry name" value="RbsD-like domain"/>
    <property type="match status" value="1"/>
</dbReference>
<dbReference type="HAMAP" id="MF_01661">
    <property type="entry name" value="D_rib_pyranase"/>
    <property type="match status" value="1"/>
</dbReference>
<dbReference type="InterPro" id="IPR023064">
    <property type="entry name" value="D-ribose_pyranase"/>
</dbReference>
<dbReference type="InterPro" id="IPR023750">
    <property type="entry name" value="RbsD-like_sf"/>
</dbReference>
<dbReference type="InterPro" id="IPR007721">
    <property type="entry name" value="RbsD_FucU"/>
</dbReference>
<dbReference type="NCBIfam" id="NF008761">
    <property type="entry name" value="PRK11797.1"/>
    <property type="match status" value="1"/>
</dbReference>
<dbReference type="PANTHER" id="PTHR37831">
    <property type="entry name" value="D-RIBOSE PYRANASE"/>
    <property type="match status" value="1"/>
</dbReference>
<dbReference type="PANTHER" id="PTHR37831:SF1">
    <property type="entry name" value="D-RIBOSE PYRANASE"/>
    <property type="match status" value="1"/>
</dbReference>
<dbReference type="Pfam" id="PF05025">
    <property type="entry name" value="RbsD_FucU"/>
    <property type="match status" value="1"/>
</dbReference>
<dbReference type="SUPFAM" id="SSF102546">
    <property type="entry name" value="RbsD-like"/>
    <property type="match status" value="1"/>
</dbReference>
<comment type="function">
    <text evidence="1">Catalyzes the interconversion of beta-pyran and beta-furan forms of D-ribose.</text>
</comment>
<comment type="catalytic activity">
    <reaction evidence="1">
        <text>beta-D-ribopyranose = beta-D-ribofuranose</text>
        <dbReference type="Rhea" id="RHEA:25432"/>
        <dbReference type="ChEBI" id="CHEBI:27476"/>
        <dbReference type="ChEBI" id="CHEBI:47002"/>
        <dbReference type="EC" id="5.4.99.62"/>
    </reaction>
</comment>
<comment type="pathway">
    <text evidence="1">Carbohydrate metabolism; D-ribose degradation; D-ribose 5-phosphate from beta-D-ribopyranose: step 1/2.</text>
</comment>
<comment type="subunit">
    <text evidence="1">Homodecamer.</text>
</comment>
<comment type="subcellular location">
    <subcellularLocation>
        <location evidence="1">Cytoplasm</location>
    </subcellularLocation>
</comment>
<comment type="similarity">
    <text evidence="1">Belongs to the RbsD / FucU family. RbsD subfamily.</text>
</comment>
<gene>
    <name evidence="1" type="primary">rbsD</name>
    <name type="ordered locus">EFER_4047</name>
</gene>
<keyword id="KW-0119">Carbohydrate metabolism</keyword>
<keyword id="KW-0963">Cytoplasm</keyword>
<keyword id="KW-0413">Isomerase</keyword>
<evidence type="ECO:0000255" key="1">
    <source>
        <dbReference type="HAMAP-Rule" id="MF_01661"/>
    </source>
</evidence>
<accession>B7LK93</accession>
<feature type="chain" id="PRO_1000187149" description="D-ribose pyranase">
    <location>
        <begin position="1"/>
        <end position="139"/>
    </location>
</feature>
<feature type="active site" description="Proton donor" evidence="1">
    <location>
        <position position="20"/>
    </location>
</feature>
<feature type="binding site" evidence="1">
    <location>
        <position position="28"/>
    </location>
    <ligand>
        <name>substrate</name>
    </ligand>
</feature>
<feature type="binding site" evidence="1">
    <location>
        <position position="106"/>
    </location>
    <ligand>
        <name>substrate</name>
    </ligand>
</feature>
<feature type="binding site" evidence="1">
    <location>
        <begin position="128"/>
        <end position="130"/>
    </location>
    <ligand>
        <name>substrate</name>
    </ligand>
</feature>
<protein>
    <recommendedName>
        <fullName evidence="1">D-ribose pyranase</fullName>
        <ecNumber evidence="1">5.4.99.62</ecNumber>
    </recommendedName>
</protein>
<proteinExistence type="inferred from homology"/>
<organism>
    <name type="scientific">Escherichia fergusonii (strain ATCC 35469 / DSM 13698 / CCUG 18766 / IAM 14443 / JCM 21226 / LMG 7866 / NBRC 102419 / NCTC 12128 / CDC 0568-73)</name>
    <dbReference type="NCBI Taxonomy" id="585054"/>
    <lineage>
        <taxon>Bacteria</taxon>
        <taxon>Pseudomonadati</taxon>
        <taxon>Pseudomonadota</taxon>
        <taxon>Gammaproteobacteria</taxon>
        <taxon>Enterobacterales</taxon>
        <taxon>Enterobacteriaceae</taxon>
        <taxon>Escherichia</taxon>
    </lineage>
</organism>
<name>RBSD_ESCF3</name>